<organism>
    <name type="scientific">Homo sapiens</name>
    <name type="common">Human</name>
    <dbReference type="NCBI Taxonomy" id="9606"/>
    <lineage>
        <taxon>Eukaryota</taxon>
        <taxon>Metazoa</taxon>
        <taxon>Chordata</taxon>
        <taxon>Craniata</taxon>
        <taxon>Vertebrata</taxon>
        <taxon>Euteleostomi</taxon>
        <taxon>Mammalia</taxon>
        <taxon>Eutheria</taxon>
        <taxon>Euarchontoglires</taxon>
        <taxon>Primates</taxon>
        <taxon>Haplorrhini</taxon>
        <taxon>Catarrhini</taxon>
        <taxon>Hominidae</taxon>
        <taxon>Homo</taxon>
    </lineage>
</organism>
<sequence length="312" mass="35720">MSAFSEAALEKKLSELSNSQQSVQTLSLWLIHHRKHSRPIVTVWERELRKAKPNRKLTFLYLANDVIQNSKRKGPEFTKDFAPVIVEAFKHVSSETDESCKKHLGRVLSIWEERSVYENDVLEQLKQALYGDKKPRKRTYEQIKVDENENCSSLGSPSEPPQTLDLVRALQDLENAASGDAAVHQRIASLPVEVQEVSLLDKITDKESGERLSKMVEDACMLLADYNGRLAAEIDDRKQLTRMLADFLRCQKEALAEKEHKLEEYKRKLARVSLVRKELRSRIQSLPDLSRLPNVTGSHMHLPFAGDIYSED</sequence>
<gene>
    <name type="primary">RPRD1A</name>
    <name type="synonym">P15RS</name>
</gene>
<name>RPR1A_HUMAN</name>
<feature type="initiator methionine" description="Removed" evidence="8 14">
    <location>
        <position position="1"/>
    </location>
</feature>
<feature type="chain" id="PRO_0000311344" description="Regulation of nuclear pre-mRNA domain-containing protein 1A">
    <location>
        <begin position="2"/>
        <end position="312"/>
    </location>
</feature>
<feature type="domain" description="CID" evidence="2">
    <location>
        <begin position="2"/>
        <end position="133"/>
    </location>
</feature>
<feature type="coiled-coil region" evidence="1">
    <location>
        <begin position="244"/>
        <end position="286"/>
    </location>
</feature>
<feature type="modified residue" description="N-acetylserine" evidence="8 14">
    <location>
        <position position="2"/>
    </location>
</feature>
<feature type="modified residue" description="Phosphoserine" evidence="16">
    <location>
        <position position="153"/>
    </location>
</feature>
<feature type="modified residue" description="Phosphoserine" evidence="16">
    <location>
        <position position="156"/>
    </location>
</feature>
<feature type="modified residue" description="Phosphoserine" evidence="15">
    <location>
        <position position="285"/>
    </location>
</feature>
<feature type="splice variant" id="VSP_029531" description="In isoform 2." evidence="9 10">
    <original>MSAFSEAALEKKLSELSNSQQSVQTLSLWLIHHRKHSRPIVTVWERELRKA</original>
    <variation>MRNSNWRFCQTGIYS</variation>
    <location>
        <begin position="1"/>
        <end position="51"/>
    </location>
</feature>
<feature type="sequence variant" id="VAR_037229" description="In a breast cancer sample; somatic mutation." evidence="4">
    <original>Q</original>
    <variation>H</variation>
    <location>
        <position position="21"/>
    </location>
</feature>
<feature type="mutagenesis site" description="Partial loss of binding to POLR2A CTD in vitro." evidence="7">
    <original>D</original>
    <variation>A</variation>
    <location>
        <position position="65"/>
    </location>
</feature>
<feature type="mutagenesis site" description="Partial loss of binding to POLR2A CTD phosphorylated at 'Ser-2' in the heptad repeats in vitro." evidence="7">
    <original>R</original>
    <variation>A</variation>
    <location>
        <position position="106"/>
    </location>
</feature>
<feature type="mutagenesis site" description="Partial loss of binding to POLR2A CTD in vitro." evidence="7">
    <original>R</original>
    <variation>A</variation>
    <location>
        <position position="114"/>
    </location>
</feature>
<feature type="sequence conflict" description="In Ref. 2; BAA91736." evidence="11" ref="2">
    <original>E</original>
    <variation>D</variation>
    <location>
        <position position="193"/>
    </location>
</feature>
<feature type="sequence conflict" description="In Ref. 2; BAA91736." evidence="11" ref="2">
    <original>I</original>
    <variation>V</variation>
    <location>
        <position position="234"/>
    </location>
</feature>
<feature type="helix" evidence="17">
    <location>
        <begin position="6"/>
        <end position="15"/>
    </location>
</feature>
<feature type="helix" evidence="17">
    <location>
        <begin position="20"/>
        <end position="32"/>
    </location>
</feature>
<feature type="helix" evidence="17">
    <location>
        <begin position="34"/>
        <end position="36"/>
    </location>
</feature>
<feature type="helix" evidence="17">
    <location>
        <begin position="37"/>
        <end position="50"/>
    </location>
</feature>
<feature type="helix" evidence="17">
    <location>
        <begin position="53"/>
        <end position="55"/>
    </location>
</feature>
<feature type="helix" evidence="17">
    <location>
        <begin position="56"/>
        <end position="70"/>
    </location>
</feature>
<feature type="turn" evidence="17">
    <location>
        <begin position="71"/>
        <end position="73"/>
    </location>
</feature>
<feature type="helix" evidence="17">
    <location>
        <begin position="76"/>
        <end position="95"/>
    </location>
</feature>
<feature type="helix" evidence="17">
    <location>
        <begin position="98"/>
        <end position="113"/>
    </location>
</feature>
<feature type="helix" evidence="17">
    <location>
        <begin position="119"/>
        <end position="130"/>
    </location>
</feature>
<proteinExistence type="evidence at protein level"/>
<evidence type="ECO:0000255" key="1"/>
<evidence type="ECO:0000255" key="2">
    <source>
        <dbReference type="PROSITE-ProRule" id="PRU00724"/>
    </source>
</evidence>
<evidence type="ECO:0000269" key="3">
    <source>
    </source>
</evidence>
<evidence type="ECO:0000269" key="4">
    <source>
    </source>
</evidence>
<evidence type="ECO:0000269" key="5">
    <source>
    </source>
</evidence>
<evidence type="ECO:0000269" key="6">
    <source>
    </source>
</evidence>
<evidence type="ECO:0000269" key="7">
    <source>
    </source>
</evidence>
<evidence type="ECO:0000269" key="8">
    <source ref="5"/>
</evidence>
<evidence type="ECO:0000303" key="9">
    <source>
    </source>
</evidence>
<evidence type="ECO:0000303" key="10">
    <source>
    </source>
</evidence>
<evidence type="ECO:0000305" key="11"/>
<evidence type="ECO:0007744" key="12">
    <source>
        <dbReference type="PDB" id="4JXT"/>
    </source>
</evidence>
<evidence type="ECO:0007744" key="13">
    <source>
        <dbReference type="PDB" id="4NAC"/>
    </source>
</evidence>
<evidence type="ECO:0007744" key="14">
    <source>
    </source>
</evidence>
<evidence type="ECO:0007744" key="15">
    <source>
    </source>
</evidence>
<evidence type="ECO:0007744" key="16">
    <source>
    </source>
</evidence>
<evidence type="ECO:0007829" key="17">
    <source>
        <dbReference type="PDB" id="4JXT"/>
    </source>
</evidence>
<keyword id="KW-0002">3D-structure</keyword>
<keyword id="KW-0007">Acetylation</keyword>
<keyword id="KW-0025">Alternative splicing</keyword>
<keyword id="KW-0175">Coiled coil</keyword>
<keyword id="KW-0903">Direct protein sequencing</keyword>
<keyword id="KW-0539">Nucleus</keyword>
<keyword id="KW-0597">Phosphoprotein</keyword>
<keyword id="KW-1267">Proteomics identification</keyword>
<keyword id="KW-1185">Reference proteome</keyword>
<comment type="function">
    <text evidence="5 6 7">Interacts with phosphorylated C-terminal heptapeptide repeat domain (CTD) of the largest RNA polymerase II subunit POLR2A, and participates in dephosphorylation of the CTD by RPAP2. May act as a negative regulator of cyclin-D1 (CCND1) and cyclin-E (CCNE1) in the cell cycle.</text>
</comment>
<comment type="subunit">
    <text evidence="5 6 7">May form a heterodimer with RPRD1B (PubMed:24997600). Associates with the RNA polymerase II subunit POLR2A (via CTD phosphorylated at 'Ser-2' and 'Ser-7' of the heptad repeats) (PubMed:22231121, PubMed:24399136, PubMed:24997600).</text>
</comment>
<comment type="interaction">
    <interactant intactId="EBI-1053506">
        <id>Q96P16</id>
    </interactant>
    <interactant intactId="EBI-358297">
        <id>O00505</id>
        <label>KPNA3</label>
    </interactant>
    <organismsDiffer>false</organismsDiffer>
    <experiments>3</experiments>
</comment>
<comment type="interaction">
    <interactant intactId="EBI-1053506">
        <id>Q96P16</id>
    </interactant>
    <interactant intactId="EBI-295301">
        <id>P24928</id>
        <label>POLR2A</label>
    </interactant>
    <organismsDiffer>false</organismsDiffer>
    <experiments>3</experiments>
</comment>
<comment type="interaction">
    <interactant intactId="EBI-1053506">
        <id>Q96P16</id>
    </interactant>
    <interactant intactId="EBI-747925">
        <id>Q9NQG5</id>
        <label>RPRD1B</label>
    </interactant>
    <organismsDiffer>false</organismsDiffer>
    <experiments>6</experiments>
</comment>
<comment type="interaction">
    <interactant intactId="EBI-16112633">
        <id>Q96P16-1</id>
    </interactant>
    <interactant intactId="EBI-395878">
        <id>Q8IXW5</id>
        <label>RPAP2</label>
    </interactant>
    <organismsDiffer>false</organismsDiffer>
    <experiments>3</experiments>
</comment>
<comment type="interaction">
    <interactant intactId="EBI-16112633">
        <id>Q96P16-1</id>
    </interactant>
    <interactant intactId="EBI-16112633">
        <id>Q96P16-1</id>
        <label>RPRD1A</label>
    </interactant>
    <organismsDiffer>false</organismsDiffer>
    <experiments>3</experiments>
</comment>
<comment type="interaction">
    <interactant intactId="EBI-16112633">
        <id>Q96P16-1</id>
    </interactant>
    <interactant intactId="EBI-747925">
        <id>Q9NQG5</id>
        <label>RPRD1B</label>
    </interactant>
    <organismsDiffer>false</organismsDiffer>
    <experiments>4</experiments>
</comment>
<comment type="interaction">
    <interactant intactId="EBI-12840198">
        <id>Q96P16-3</id>
    </interactant>
    <interactant intactId="EBI-6658203">
        <id>Q86YD7</id>
        <label>FAM90A1</label>
    </interactant>
    <organismsDiffer>false</organismsDiffer>
    <experiments>3</experiments>
</comment>
<comment type="interaction">
    <interactant intactId="EBI-12840198">
        <id>Q96P16-3</id>
    </interactant>
    <interactant intactId="EBI-740220">
        <id>O14964</id>
        <label>HGS</label>
    </interactant>
    <organismsDiffer>false</organismsDiffer>
    <experiments>3</experiments>
</comment>
<comment type="interaction">
    <interactant intactId="EBI-12840198">
        <id>Q96P16-3</id>
    </interactant>
    <interactant intactId="EBI-710124">
        <id>O60341</id>
        <label>KDM1A</label>
    </interactant>
    <organismsDiffer>false</organismsDiffer>
    <experiments>3</experiments>
</comment>
<comment type="interaction">
    <interactant intactId="EBI-12840198">
        <id>Q96P16-3</id>
    </interactant>
    <interactant intactId="EBI-2341787">
        <id>Q17RB8</id>
        <label>LONRF1</label>
    </interactant>
    <organismsDiffer>false</organismsDiffer>
    <experiments>3</experiments>
</comment>
<comment type="interaction">
    <interactant intactId="EBI-12840198">
        <id>Q96P16-3</id>
    </interactant>
    <interactant intactId="EBI-398874">
        <id>Q9UBU9</id>
        <label>NXF1</label>
    </interactant>
    <organismsDiffer>false</organismsDiffer>
    <experiments>3</experiments>
</comment>
<comment type="interaction">
    <interactant intactId="EBI-12840198">
        <id>Q96P16-3</id>
    </interactant>
    <interactant intactId="EBI-747925">
        <id>Q9NQG5</id>
        <label>RPRD1B</label>
    </interactant>
    <organismsDiffer>false</organismsDiffer>
    <experiments>3</experiments>
</comment>
<comment type="interaction">
    <interactant intactId="EBI-12840198">
        <id>Q96P16-3</id>
    </interactant>
    <interactant intactId="EBI-727004">
        <id>O00560</id>
        <label>SDCBP</label>
    </interactant>
    <organismsDiffer>false</organismsDiffer>
    <experiments>3</experiments>
</comment>
<comment type="interaction">
    <interactant intactId="EBI-12840198">
        <id>Q96P16-3</id>
    </interactant>
    <interactant intactId="EBI-11741890">
        <id>Q86VK4-3</id>
        <label>ZNF410</label>
    </interactant>
    <organismsDiffer>false</organismsDiffer>
    <experiments>3</experiments>
</comment>
<comment type="interaction">
    <interactant intactId="EBI-12840198">
        <id>Q96P16-3</id>
    </interactant>
    <interactant intactId="EBI-7254550">
        <id>P36508</id>
        <label>ZNF76</label>
    </interactant>
    <organismsDiffer>false</organismsDiffer>
    <experiments>3</experiments>
</comment>
<comment type="subcellular location">
    <subcellularLocation>
        <location evidence="5">Nucleus</location>
    </subcellularLocation>
</comment>
<comment type="alternative products">
    <event type="alternative splicing"/>
    <isoform>
        <id>Q96P16-1</id>
        <name>1</name>
        <sequence type="displayed"/>
    </isoform>
    <isoform>
        <id>Q96P16-3</id>
        <name>2</name>
        <sequence type="described" ref="VSP_029531"/>
    </isoform>
</comment>
<comment type="induction">
    <text evidence="3">Up-regulated in cells overexpressing CDKN2B.</text>
</comment>
<comment type="similarity">
    <text evidence="11">Belongs to the UPF0400 (RTT103) family.</text>
</comment>
<comment type="sequence caution" evidence="11">
    <conflict type="miscellaneous discrepancy">
        <sequence resource="EMBL-CDS" id="AAH10136"/>
    </conflict>
    <text>Probable cloning artifact.</text>
</comment>
<dbReference type="EMBL" id="AF419845">
    <property type="protein sequence ID" value="AAL15972.1"/>
    <property type="molecule type" value="mRNA"/>
</dbReference>
<dbReference type="EMBL" id="AK001518">
    <property type="protein sequence ID" value="BAA91736.1"/>
    <property type="molecule type" value="mRNA"/>
</dbReference>
<dbReference type="EMBL" id="AK292907">
    <property type="protein sequence ID" value="BAF85596.1"/>
    <property type="molecule type" value="mRNA"/>
</dbReference>
<dbReference type="EMBL" id="AK314569">
    <property type="protein sequence ID" value="BAG37150.1"/>
    <property type="molecule type" value="mRNA"/>
</dbReference>
<dbReference type="EMBL" id="CH471088">
    <property type="protein sequence ID" value="EAX01365.1"/>
    <property type="molecule type" value="Genomic_DNA"/>
</dbReference>
<dbReference type="EMBL" id="CH471088">
    <property type="protein sequence ID" value="EAX01366.1"/>
    <property type="molecule type" value="Genomic_DNA"/>
</dbReference>
<dbReference type="EMBL" id="CH471088">
    <property type="protein sequence ID" value="EAX01367.1"/>
    <property type="molecule type" value="Genomic_DNA"/>
</dbReference>
<dbReference type="EMBL" id="BC000225">
    <property type="protein sequence ID" value="AAH00225.2"/>
    <property type="molecule type" value="mRNA"/>
</dbReference>
<dbReference type="EMBL" id="BC010136">
    <property type="protein sequence ID" value="AAH10136.1"/>
    <property type="status" value="ALT_SEQ"/>
    <property type="molecule type" value="mRNA"/>
</dbReference>
<dbReference type="CCDS" id="CCDS11917.1">
    <molecule id="Q96P16-1"/>
</dbReference>
<dbReference type="CCDS" id="CCDS77178.1">
    <molecule id="Q96P16-3"/>
</dbReference>
<dbReference type="RefSeq" id="NP_001290340.1">
    <molecule id="Q96P16-3"/>
    <property type="nucleotide sequence ID" value="NM_001303411.2"/>
</dbReference>
<dbReference type="RefSeq" id="NP_001290341.1">
    <molecule id="Q96P16-3"/>
    <property type="nucleotide sequence ID" value="NM_001303412.2"/>
</dbReference>
<dbReference type="RefSeq" id="NP_001290342.1">
    <property type="nucleotide sequence ID" value="NM_001303413.1"/>
</dbReference>
<dbReference type="RefSeq" id="NP_060640.2">
    <molecule id="Q96P16-1"/>
    <property type="nucleotide sequence ID" value="NM_018170.4"/>
</dbReference>
<dbReference type="RefSeq" id="XP_011524350.1">
    <property type="nucleotide sequence ID" value="XM_011526048.1"/>
</dbReference>
<dbReference type="RefSeq" id="XP_011524351.1">
    <property type="nucleotide sequence ID" value="XM_011526049.1"/>
</dbReference>
<dbReference type="RefSeq" id="XP_011524352.1">
    <property type="nucleotide sequence ID" value="XM_011526050.1"/>
</dbReference>
<dbReference type="PDB" id="4JXT">
    <property type="method" value="X-ray"/>
    <property type="resolution" value="1.90 A"/>
    <property type="chains" value="A=1-137"/>
</dbReference>
<dbReference type="PDB" id="4NAC">
    <property type="method" value="X-ray"/>
    <property type="resolution" value="2.00 A"/>
    <property type="chains" value="A/B=1-131"/>
</dbReference>
<dbReference type="PDBsum" id="4JXT"/>
<dbReference type="PDBsum" id="4NAC"/>
<dbReference type="SMR" id="Q96P16"/>
<dbReference type="BioGRID" id="120494">
    <property type="interactions" value="189"/>
</dbReference>
<dbReference type="DIP" id="DIP-50901N"/>
<dbReference type="FunCoup" id="Q96P16">
    <property type="interactions" value="3171"/>
</dbReference>
<dbReference type="IntAct" id="Q96P16">
    <property type="interactions" value="71"/>
</dbReference>
<dbReference type="MINT" id="Q96P16"/>
<dbReference type="STRING" id="9606.ENSP00000381984"/>
<dbReference type="GlyGen" id="Q96P16">
    <property type="glycosylation" value="1 site, 1 O-linked glycan (1 site)"/>
</dbReference>
<dbReference type="iPTMnet" id="Q96P16"/>
<dbReference type="PhosphoSitePlus" id="Q96P16"/>
<dbReference type="BioMuta" id="RPRD1A"/>
<dbReference type="DMDM" id="74717048"/>
<dbReference type="jPOST" id="Q96P16"/>
<dbReference type="MassIVE" id="Q96P16"/>
<dbReference type="PaxDb" id="9606-ENSP00000381984"/>
<dbReference type="PeptideAtlas" id="Q96P16"/>
<dbReference type="ProteomicsDB" id="77597">
    <molecule id="Q96P16-1"/>
</dbReference>
<dbReference type="ProteomicsDB" id="77598">
    <molecule id="Q96P16-3"/>
</dbReference>
<dbReference type="Pumba" id="Q96P16"/>
<dbReference type="ABCD" id="Q96P16">
    <property type="antibodies" value="6 sequenced antibodies"/>
</dbReference>
<dbReference type="Antibodypedia" id="22307">
    <property type="antibodies" value="124 antibodies from 25 providers"/>
</dbReference>
<dbReference type="DNASU" id="55197"/>
<dbReference type="Ensembl" id="ENST00000357384.8">
    <molecule id="Q96P16-1"/>
    <property type="protein sequence ID" value="ENSP00000349955.4"/>
    <property type="gene ID" value="ENSG00000141425.18"/>
</dbReference>
<dbReference type="Ensembl" id="ENST00000399022.9">
    <molecule id="Q96P16-1"/>
    <property type="protein sequence ID" value="ENSP00000381984.3"/>
    <property type="gene ID" value="ENSG00000141425.18"/>
</dbReference>
<dbReference type="Ensembl" id="ENST00000588737.5">
    <molecule id="Q96P16-3"/>
    <property type="protein sequence ID" value="ENSP00000465444.1"/>
    <property type="gene ID" value="ENSG00000141425.18"/>
</dbReference>
<dbReference type="Ensembl" id="ENST00000590898.5">
    <molecule id="Q96P16-3"/>
    <property type="protein sequence ID" value="ENSP00000467991.1"/>
    <property type="gene ID" value="ENSG00000141425.18"/>
</dbReference>
<dbReference type="GeneID" id="55197"/>
<dbReference type="KEGG" id="hsa:55197"/>
<dbReference type="MANE-Select" id="ENST00000399022.9">
    <property type="protein sequence ID" value="ENSP00000381984.3"/>
    <property type="RefSeq nucleotide sequence ID" value="NM_018170.5"/>
    <property type="RefSeq protein sequence ID" value="NP_060640.2"/>
</dbReference>
<dbReference type="UCSC" id="uc002kze.2">
    <molecule id="Q96P16-1"/>
    <property type="organism name" value="human"/>
</dbReference>
<dbReference type="AGR" id="HGNC:25560"/>
<dbReference type="CTD" id="55197"/>
<dbReference type="DisGeNET" id="55197"/>
<dbReference type="GeneCards" id="RPRD1A"/>
<dbReference type="HGNC" id="HGNC:25560">
    <property type="gene designation" value="RPRD1A"/>
</dbReference>
<dbReference type="HPA" id="ENSG00000141425">
    <property type="expression patterns" value="Low tissue specificity"/>
</dbReference>
<dbReference type="MIM" id="610347">
    <property type="type" value="gene"/>
</dbReference>
<dbReference type="neXtProt" id="NX_Q96P16"/>
<dbReference type="OpenTargets" id="ENSG00000141425"/>
<dbReference type="PharmGKB" id="PA162402042"/>
<dbReference type="VEuPathDB" id="HostDB:ENSG00000141425"/>
<dbReference type="eggNOG" id="KOG2669">
    <property type="taxonomic scope" value="Eukaryota"/>
</dbReference>
<dbReference type="GeneTree" id="ENSGT00950000183094"/>
<dbReference type="HOGENOM" id="CLU_055523_1_0_1"/>
<dbReference type="InParanoid" id="Q96P16"/>
<dbReference type="OMA" id="LWMQRLK"/>
<dbReference type="OrthoDB" id="10069473at2759"/>
<dbReference type="PAN-GO" id="Q96P16">
    <property type="GO annotations" value="3 GO annotations based on evolutionary models"/>
</dbReference>
<dbReference type="PhylomeDB" id="Q96P16"/>
<dbReference type="TreeFam" id="TF320926"/>
<dbReference type="PathwayCommons" id="Q96P16"/>
<dbReference type="Reactome" id="R-HSA-6807505">
    <property type="pathway name" value="RNA polymerase II transcribes snRNA genes"/>
</dbReference>
<dbReference type="SignaLink" id="Q96P16"/>
<dbReference type="BioGRID-ORCS" id="55197">
    <property type="hits" value="47 hits in 1160 CRISPR screens"/>
</dbReference>
<dbReference type="ChiTaRS" id="RPRD1A">
    <property type="organism name" value="human"/>
</dbReference>
<dbReference type="EvolutionaryTrace" id="Q96P16"/>
<dbReference type="GenomeRNAi" id="55197"/>
<dbReference type="Pharos" id="Q96P16">
    <property type="development level" value="Tbio"/>
</dbReference>
<dbReference type="PRO" id="PR:Q96P16"/>
<dbReference type="Proteomes" id="UP000005640">
    <property type="component" value="Chromosome 18"/>
</dbReference>
<dbReference type="RNAct" id="Q96P16">
    <property type="molecule type" value="protein"/>
</dbReference>
<dbReference type="Bgee" id="ENSG00000141425">
    <property type="expression patterns" value="Expressed in Brodmann (1909) area 23 and 200 other cell types or tissues"/>
</dbReference>
<dbReference type="ExpressionAtlas" id="Q96P16">
    <property type="expression patterns" value="baseline and differential"/>
</dbReference>
<dbReference type="GO" id="GO:0005654">
    <property type="term" value="C:nucleoplasm"/>
    <property type="evidence" value="ECO:0000304"/>
    <property type="project" value="Reactome"/>
</dbReference>
<dbReference type="GO" id="GO:0005634">
    <property type="term" value="C:nucleus"/>
    <property type="evidence" value="ECO:0000314"/>
    <property type="project" value="UniProtKB"/>
</dbReference>
<dbReference type="GO" id="GO:0097550">
    <property type="term" value="C:transcription preinitiation complex"/>
    <property type="evidence" value="ECO:0000314"/>
    <property type="project" value="UniProtKB"/>
</dbReference>
<dbReference type="GO" id="GO:0042802">
    <property type="term" value="F:identical protein binding"/>
    <property type="evidence" value="ECO:0000353"/>
    <property type="project" value="IntAct"/>
</dbReference>
<dbReference type="GO" id="GO:0099122">
    <property type="term" value="F:RNA polymerase II C-terminal domain binding"/>
    <property type="evidence" value="ECO:0007669"/>
    <property type="project" value="InterPro"/>
</dbReference>
<dbReference type="GO" id="GO:0000993">
    <property type="term" value="F:RNA polymerase II complex binding"/>
    <property type="evidence" value="ECO:0000318"/>
    <property type="project" value="GO_Central"/>
</dbReference>
<dbReference type="GO" id="GO:0031124">
    <property type="term" value="P:mRNA 3'-end processing"/>
    <property type="evidence" value="ECO:0000318"/>
    <property type="project" value="GO_Central"/>
</dbReference>
<dbReference type="GO" id="GO:0001111">
    <property type="term" value="P:RNA polymerase II promoter clearance"/>
    <property type="evidence" value="ECO:0000315"/>
    <property type="project" value="UniProtKB"/>
</dbReference>
<dbReference type="CDD" id="cd17011">
    <property type="entry name" value="CID_RPRD1A"/>
    <property type="match status" value="1"/>
</dbReference>
<dbReference type="FunFam" id="1.25.40.90:FF:000007">
    <property type="entry name" value="Regulation of nuclear pre-mRNA domain-containing protein 1B"/>
    <property type="match status" value="1"/>
</dbReference>
<dbReference type="Gene3D" id="1.25.40.90">
    <property type="match status" value="1"/>
</dbReference>
<dbReference type="Gene3D" id="6.10.250.2560">
    <property type="match status" value="1"/>
</dbReference>
<dbReference type="InterPro" id="IPR006569">
    <property type="entry name" value="CID_dom"/>
</dbReference>
<dbReference type="InterPro" id="IPR008942">
    <property type="entry name" value="ENTH_VHS"/>
</dbReference>
<dbReference type="InterPro" id="IPR032337">
    <property type="entry name" value="RPRD1A/B_C"/>
</dbReference>
<dbReference type="InterPro" id="IPR047884">
    <property type="entry name" value="RPRD1A_CID"/>
</dbReference>
<dbReference type="PANTHER" id="PTHR12460">
    <property type="entry name" value="CYCLIN-DEPENDENT KINASE INHIBITOR-RELATED PROTEIN"/>
    <property type="match status" value="1"/>
</dbReference>
<dbReference type="PANTHER" id="PTHR12460:SF2">
    <property type="entry name" value="REGULATION OF NUCLEAR PRE-MRNA DOMAIN-CONTAINING PROTEIN 1A"/>
    <property type="match status" value="1"/>
</dbReference>
<dbReference type="Pfam" id="PF04818">
    <property type="entry name" value="CID"/>
    <property type="match status" value="1"/>
</dbReference>
<dbReference type="Pfam" id="PF16566">
    <property type="entry name" value="CREPT"/>
    <property type="match status" value="1"/>
</dbReference>
<dbReference type="SMART" id="SM00582">
    <property type="entry name" value="RPR"/>
    <property type="match status" value="1"/>
</dbReference>
<dbReference type="SUPFAM" id="SSF48464">
    <property type="entry name" value="ENTH/VHS domain"/>
    <property type="match status" value="1"/>
</dbReference>
<dbReference type="PROSITE" id="PS51391">
    <property type="entry name" value="CID"/>
    <property type="match status" value="1"/>
</dbReference>
<accession>Q96P16</accession>
<accession>A8KA42</accession>
<accession>B2RBA3</accession>
<accession>Q7Z5G8</accession>
<accession>Q96FY9</accession>
<accession>Q9NVL4</accession>
<reference key="1">
    <citation type="journal article" date="2002" name="Biochem. Biophys. Res. Commun.">
        <title>Identification and characterization of P15RS, a novel P15(INK4b) related gene on G1/S progression.</title>
        <authorList>
            <person name="Liu J."/>
            <person name="Liu H."/>
            <person name="Zhang X."/>
            <person name="Gao P."/>
            <person name="Wang J."/>
            <person name="Hu Z."/>
        </authorList>
    </citation>
    <scope>NUCLEOTIDE SEQUENCE [MRNA] (ISOFORM 1)</scope>
    <scope>POSSIBLE FUNCTION</scope>
    <scope>INDUCTION</scope>
</reference>
<reference key="2">
    <citation type="journal article" date="2004" name="Nat. Genet.">
        <title>Complete sequencing and characterization of 21,243 full-length human cDNAs.</title>
        <authorList>
            <person name="Ota T."/>
            <person name="Suzuki Y."/>
            <person name="Nishikawa T."/>
            <person name="Otsuki T."/>
            <person name="Sugiyama T."/>
            <person name="Irie R."/>
            <person name="Wakamatsu A."/>
            <person name="Hayashi K."/>
            <person name="Sato H."/>
            <person name="Nagai K."/>
            <person name="Kimura K."/>
            <person name="Makita H."/>
            <person name="Sekine M."/>
            <person name="Obayashi M."/>
            <person name="Nishi T."/>
            <person name="Shibahara T."/>
            <person name="Tanaka T."/>
            <person name="Ishii S."/>
            <person name="Yamamoto J."/>
            <person name="Saito K."/>
            <person name="Kawai Y."/>
            <person name="Isono Y."/>
            <person name="Nakamura Y."/>
            <person name="Nagahari K."/>
            <person name="Murakami K."/>
            <person name="Yasuda T."/>
            <person name="Iwayanagi T."/>
            <person name="Wagatsuma M."/>
            <person name="Shiratori A."/>
            <person name="Sudo H."/>
            <person name="Hosoiri T."/>
            <person name="Kaku Y."/>
            <person name="Kodaira H."/>
            <person name="Kondo H."/>
            <person name="Sugawara M."/>
            <person name="Takahashi M."/>
            <person name="Kanda K."/>
            <person name="Yokoi T."/>
            <person name="Furuya T."/>
            <person name="Kikkawa E."/>
            <person name="Omura Y."/>
            <person name="Abe K."/>
            <person name="Kamihara K."/>
            <person name="Katsuta N."/>
            <person name="Sato K."/>
            <person name="Tanikawa M."/>
            <person name="Yamazaki M."/>
            <person name="Ninomiya K."/>
            <person name="Ishibashi T."/>
            <person name="Yamashita H."/>
            <person name="Murakawa K."/>
            <person name="Fujimori K."/>
            <person name="Tanai H."/>
            <person name="Kimata M."/>
            <person name="Watanabe M."/>
            <person name="Hiraoka S."/>
            <person name="Chiba Y."/>
            <person name="Ishida S."/>
            <person name="Ono Y."/>
            <person name="Takiguchi S."/>
            <person name="Watanabe S."/>
            <person name="Yosida M."/>
            <person name="Hotuta T."/>
            <person name="Kusano J."/>
            <person name="Kanehori K."/>
            <person name="Takahashi-Fujii A."/>
            <person name="Hara H."/>
            <person name="Tanase T.-O."/>
            <person name="Nomura Y."/>
            <person name="Togiya S."/>
            <person name="Komai F."/>
            <person name="Hara R."/>
            <person name="Takeuchi K."/>
            <person name="Arita M."/>
            <person name="Imose N."/>
            <person name="Musashino K."/>
            <person name="Yuuki H."/>
            <person name="Oshima A."/>
            <person name="Sasaki N."/>
            <person name="Aotsuka S."/>
            <person name="Yoshikawa Y."/>
            <person name="Matsunawa H."/>
            <person name="Ichihara T."/>
            <person name="Shiohata N."/>
            <person name="Sano S."/>
            <person name="Moriya S."/>
            <person name="Momiyama H."/>
            <person name="Satoh N."/>
            <person name="Takami S."/>
            <person name="Terashima Y."/>
            <person name="Suzuki O."/>
            <person name="Nakagawa S."/>
            <person name="Senoh A."/>
            <person name="Mizoguchi H."/>
            <person name="Goto Y."/>
            <person name="Shimizu F."/>
            <person name="Wakebe H."/>
            <person name="Hishigaki H."/>
            <person name="Watanabe T."/>
            <person name="Sugiyama A."/>
            <person name="Takemoto M."/>
            <person name="Kawakami B."/>
            <person name="Yamazaki M."/>
            <person name="Watanabe K."/>
            <person name="Kumagai A."/>
            <person name="Itakura S."/>
            <person name="Fukuzumi Y."/>
            <person name="Fujimori Y."/>
            <person name="Komiyama M."/>
            <person name="Tashiro H."/>
            <person name="Tanigami A."/>
            <person name="Fujiwara T."/>
            <person name="Ono T."/>
            <person name="Yamada K."/>
            <person name="Fujii Y."/>
            <person name="Ozaki K."/>
            <person name="Hirao M."/>
            <person name="Ohmori Y."/>
            <person name="Kawabata A."/>
            <person name="Hikiji T."/>
            <person name="Kobatake N."/>
            <person name="Inagaki H."/>
            <person name="Ikema Y."/>
            <person name="Okamoto S."/>
            <person name="Okitani R."/>
            <person name="Kawakami T."/>
            <person name="Noguchi S."/>
            <person name="Itoh T."/>
            <person name="Shigeta K."/>
            <person name="Senba T."/>
            <person name="Matsumura K."/>
            <person name="Nakajima Y."/>
            <person name="Mizuno T."/>
            <person name="Morinaga M."/>
            <person name="Sasaki M."/>
            <person name="Togashi T."/>
            <person name="Oyama M."/>
            <person name="Hata H."/>
            <person name="Watanabe M."/>
            <person name="Komatsu T."/>
            <person name="Mizushima-Sugano J."/>
            <person name="Satoh T."/>
            <person name="Shirai Y."/>
            <person name="Takahashi Y."/>
            <person name="Nakagawa K."/>
            <person name="Okumura K."/>
            <person name="Nagase T."/>
            <person name="Nomura N."/>
            <person name="Kikuchi H."/>
            <person name="Masuho Y."/>
            <person name="Yamashita R."/>
            <person name="Nakai K."/>
            <person name="Yada T."/>
            <person name="Nakamura Y."/>
            <person name="Ohara O."/>
            <person name="Isogai T."/>
            <person name="Sugano S."/>
        </authorList>
    </citation>
    <scope>NUCLEOTIDE SEQUENCE [LARGE SCALE MRNA] (ISOFORMS 1 AND 2)</scope>
    <source>
        <tissue>Placenta</tissue>
        <tissue>Teratocarcinoma</tissue>
        <tissue>Trachea</tissue>
    </source>
</reference>
<reference key="3">
    <citation type="submission" date="2005-07" db="EMBL/GenBank/DDBJ databases">
        <authorList>
            <person name="Mural R.J."/>
            <person name="Istrail S."/>
            <person name="Sutton G.G."/>
            <person name="Florea L."/>
            <person name="Halpern A.L."/>
            <person name="Mobarry C.M."/>
            <person name="Lippert R."/>
            <person name="Walenz B."/>
            <person name="Shatkay H."/>
            <person name="Dew I."/>
            <person name="Miller J.R."/>
            <person name="Flanigan M.J."/>
            <person name="Edwards N.J."/>
            <person name="Bolanos R."/>
            <person name="Fasulo D."/>
            <person name="Halldorsson B.V."/>
            <person name="Hannenhalli S."/>
            <person name="Turner R."/>
            <person name="Yooseph S."/>
            <person name="Lu F."/>
            <person name="Nusskern D.R."/>
            <person name="Shue B.C."/>
            <person name="Zheng X.H."/>
            <person name="Zhong F."/>
            <person name="Delcher A.L."/>
            <person name="Huson D.H."/>
            <person name="Kravitz S.A."/>
            <person name="Mouchard L."/>
            <person name="Reinert K."/>
            <person name="Remington K.A."/>
            <person name="Clark A.G."/>
            <person name="Waterman M.S."/>
            <person name="Eichler E.E."/>
            <person name="Adams M.D."/>
            <person name="Hunkapiller M.W."/>
            <person name="Myers E.W."/>
            <person name="Venter J.C."/>
        </authorList>
    </citation>
    <scope>NUCLEOTIDE SEQUENCE [LARGE SCALE GENOMIC DNA]</scope>
</reference>
<reference key="4">
    <citation type="journal article" date="2004" name="Genome Res.">
        <title>The status, quality, and expansion of the NIH full-length cDNA project: the Mammalian Gene Collection (MGC).</title>
        <authorList>
            <consortium name="The MGC Project Team"/>
        </authorList>
    </citation>
    <scope>NUCLEOTIDE SEQUENCE [LARGE SCALE MRNA] (ISOFORM 2)</scope>
    <scope>NUCLEOTIDE SEQUENCE [LARGE SCALE MRNA] OF 1-263 (ISOFORM 1)</scope>
    <source>
        <tissue>Eye</tissue>
        <tissue>Muscle</tissue>
    </source>
</reference>
<reference key="5">
    <citation type="submission" date="2010-01" db="UniProtKB">
        <authorList>
            <person name="Bienvenut W.V."/>
            <person name="Bilsland A.E."/>
            <person name="Keith W.N."/>
        </authorList>
    </citation>
    <scope>PROTEIN SEQUENCE OF 2-12; 107-114; 169-186; 230-237; 243-249 AND 283-291</scope>
    <scope>CLEAVAGE OF INITIATOR METHIONINE</scope>
    <scope>ACETYLATION AT SER-2</scope>
    <scope>IDENTIFICATION BY MASS SPECTROMETRY</scope>
    <source>
        <tissue>Colon carcinoma</tissue>
    </source>
</reference>
<reference key="6">
    <citation type="journal article" date="2009" name="Anal. Chem.">
        <title>Lys-N and trypsin cover complementary parts of the phosphoproteome in a refined SCX-based approach.</title>
        <authorList>
            <person name="Gauci S."/>
            <person name="Helbig A.O."/>
            <person name="Slijper M."/>
            <person name="Krijgsveld J."/>
            <person name="Heck A.J."/>
            <person name="Mohammed S."/>
        </authorList>
    </citation>
    <scope>ACETYLATION [LARGE SCALE ANALYSIS] AT SER-2</scope>
    <scope>CLEAVAGE OF INITIATOR METHIONINE [LARGE SCALE ANALYSIS]</scope>
    <scope>IDENTIFICATION BY MASS SPECTROMETRY [LARGE SCALE ANALYSIS]</scope>
</reference>
<reference key="7">
    <citation type="journal article" date="2011" name="BMC Syst. Biol.">
        <title>Initial characterization of the human central proteome.</title>
        <authorList>
            <person name="Burkard T.R."/>
            <person name="Planyavsky M."/>
            <person name="Kaupe I."/>
            <person name="Breitwieser F.P."/>
            <person name="Buerckstuemmer T."/>
            <person name="Bennett K.L."/>
            <person name="Superti-Furga G."/>
            <person name="Colinge J."/>
        </authorList>
    </citation>
    <scope>IDENTIFICATION BY MASS SPECTROMETRY [LARGE SCALE ANALYSIS]</scope>
</reference>
<reference key="8">
    <citation type="journal article" date="2011" name="Transcription">
        <title>Control of the RNA polymerase II phosphorylation state in promoter regions by CTD interaction domain-containing proteins RPRD1A and RPRD1B.</title>
        <authorList>
            <person name="Ni Z."/>
            <person name="Olsen J.B."/>
            <person name="Guo X."/>
            <person name="Zhong G."/>
            <person name="Ruan E.D."/>
            <person name="Marcon E."/>
            <person name="Young P."/>
            <person name="Guo H."/>
            <person name="Li J."/>
            <person name="Moffat J."/>
            <person name="Emili A."/>
            <person name="Greenblatt J.F."/>
        </authorList>
    </citation>
    <scope>IDENTIFICATION IN THE RNA POLYMERASE II COMPLEX</scope>
    <scope>FUNCTION</scope>
    <scope>SUBCELLULAR LOCATION</scope>
</reference>
<reference key="9">
    <citation type="journal article" date="2013" name="J. Proteome Res.">
        <title>Toward a comprehensive characterization of a human cancer cell phosphoproteome.</title>
        <authorList>
            <person name="Zhou H."/>
            <person name="Di Palma S."/>
            <person name="Preisinger C."/>
            <person name="Peng M."/>
            <person name="Polat A.N."/>
            <person name="Heck A.J."/>
            <person name="Mohammed S."/>
        </authorList>
    </citation>
    <scope>PHOSPHORYLATION [LARGE SCALE ANALYSIS] AT SER-285</scope>
    <scope>IDENTIFICATION BY MASS SPECTROMETRY [LARGE SCALE ANALYSIS]</scope>
    <source>
        <tissue>Cervix carcinoma</tissue>
        <tissue>Erythroleukemia</tissue>
    </source>
</reference>
<reference key="10">
    <citation type="journal article" date="2014" name="J. Proteomics">
        <title>An enzyme assisted RP-RPLC approach for in-depth analysis of human liver phosphoproteome.</title>
        <authorList>
            <person name="Bian Y."/>
            <person name="Song C."/>
            <person name="Cheng K."/>
            <person name="Dong M."/>
            <person name="Wang F."/>
            <person name="Huang J."/>
            <person name="Sun D."/>
            <person name="Wang L."/>
            <person name="Ye M."/>
            <person name="Zou H."/>
        </authorList>
    </citation>
    <scope>PHOSPHORYLATION [LARGE SCALE ANALYSIS] AT SER-153 AND SER-156</scope>
    <scope>IDENTIFICATION BY MASS SPECTROMETRY [LARGE SCALE ANALYSIS]</scope>
    <source>
        <tissue>Liver</tissue>
    </source>
</reference>
<reference key="11">
    <citation type="journal article" date="2006" name="Science">
        <title>The consensus coding sequences of human breast and colorectal cancers.</title>
        <authorList>
            <person name="Sjoeblom T."/>
            <person name="Jones S."/>
            <person name="Wood L.D."/>
            <person name="Parsons D.W."/>
            <person name="Lin J."/>
            <person name="Barber T.D."/>
            <person name="Mandelker D."/>
            <person name="Leary R.J."/>
            <person name="Ptak J."/>
            <person name="Silliman N."/>
            <person name="Szabo S."/>
            <person name="Buckhaults P."/>
            <person name="Farrell C."/>
            <person name="Meeh P."/>
            <person name="Markowitz S.D."/>
            <person name="Willis J."/>
            <person name="Dawson D."/>
            <person name="Willson J.K.V."/>
            <person name="Gazdar A.F."/>
            <person name="Hartigan J."/>
            <person name="Wu L."/>
            <person name="Liu C."/>
            <person name="Parmigiani G."/>
            <person name="Park B.H."/>
            <person name="Bachman K.E."/>
            <person name="Papadopoulos N."/>
            <person name="Vogelstein B."/>
            <person name="Kinzler K.W."/>
            <person name="Velculescu V.E."/>
        </authorList>
    </citation>
    <scope>VARIANT [LARGE SCALE ANALYSIS] HIS-21</scope>
</reference>
<reference evidence="13" key="12">
    <citation type="journal article" date="2014" name="Sci. China Life Sci.">
        <title>Structural basis for the recognition of RNA polymerase II C-terminal domain by CREPT and p15RS.</title>
        <authorList>
            <person name="Mei K."/>
            <person name="Jin Z."/>
            <person name="Ren F."/>
            <person name="Wang Y."/>
            <person name="Chang Z."/>
            <person name="Wang X."/>
        </authorList>
    </citation>
    <scope>X-RAY CRYSTALLOGRAPHY (2.00 ANGSTROMS) OF 1-131</scope>
    <scope>FUNCTION</scope>
    <scope>INTERACTION WITH POLR2A</scope>
</reference>
<reference evidence="12" key="13">
    <citation type="journal article" date="2014" name="Nat. Struct. Mol. Biol.">
        <title>RPRD1A and RPRD1B are human RNA polymerase II C-terminal domain scaffolds for Ser5 dephosphorylation.</title>
        <authorList>
            <person name="Ni Z."/>
            <person name="Xu C."/>
            <person name="Guo X."/>
            <person name="Hunter G.O."/>
            <person name="Kuznetsova O.V."/>
            <person name="Tempel W."/>
            <person name="Marcon E."/>
            <person name="Zhong G."/>
            <person name="Guo H."/>
            <person name="Kuo W.H."/>
            <person name="Li J."/>
            <person name="Young P."/>
            <person name="Olsen J.B."/>
            <person name="Wan C."/>
            <person name="Loppnau P."/>
            <person name="El Bakkouri M."/>
            <person name="Senisterra G.A."/>
            <person name="He H."/>
            <person name="Huang H."/>
            <person name="Sidhu S.S."/>
            <person name="Emili A."/>
            <person name="Murphy S."/>
            <person name="Mosley A.L."/>
            <person name="Arrowsmith C.H."/>
            <person name="Min J."/>
            <person name="Greenblatt J.F."/>
        </authorList>
    </citation>
    <scope>X-RAY CRYSTALLOGRAPHY (1.90 ANGSTROMS) OF 1-137</scope>
    <scope>FUNCTION</scope>
    <scope>SUBUNIT</scope>
    <scope>MUTAGENESIS OF ASP-65; ARG-106 AND ARG-114</scope>
</reference>
<protein>
    <recommendedName>
        <fullName>Regulation of nuclear pre-mRNA domain-containing protein 1A</fullName>
    </recommendedName>
    <alternativeName>
        <fullName>Cyclin-dependent kinase inhibitor 2B-related protein</fullName>
    </alternativeName>
    <alternativeName>
        <fullName>p15INK4B-related protein</fullName>
    </alternativeName>
</protein>